<proteinExistence type="evidence at protein level"/>
<keyword id="KW-1015">Disulfide bond</keyword>
<keyword id="KW-0325">Glycoprotein</keyword>
<keyword id="KW-0378">Hydrolase</keyword>
<keyword id="KW-1185">Reference proteome</keyword>
<keyword id="KW-0964">Secreted</keyword>
<keyword id="KW-0719">Serine esterase</keyword>
<protein>
    <recommendedName>
        <fullName>Carboxylesterase 5A</fullName>
        <ecNumber>3.1.1.1</ecNumber>
    </recommendedName>
    <alternativeName>
        <fullName>Carboxylesterase-like urinary excreted protein homolog</fullName>
        <shortName>Cauxin</shortName>
    </alternativeName>
</protein>
<accession>Q3T930</accession>
<name>EST5A_SHEEP</name>
<organism>
    <name type="scientific">Ovis aries</name>
    <name type="common">Sheep</name>
    <dbReference type="NCBI Taxonomy" id="9940"/>
    <lineage>
        <taxon>Eukaryota</taxon>
        <taxon>Metazoa</taxon>
        <taxon>Chordata</taxon>
        <taxon>Craniata</taxon>
        <taxon>Vertebrata</taxon>
        <taxon>Euteleostomi</taxon>
        <taxon>Mammalia</taxon>
        <taxon>Eutheria</taxon>
        <taxon>Laurasiatheria</taxon>
        <taxon>Artiodactyla</taxon>
        <taxon>Ruminantia</taxon>
        <taxon>Pecora</taxon>
        <taxon>Bovidae</taxon>
        <taxon>Caprinae</taxon>
        <taxon>Ovis</taxon>
    </lineage>
</organism>
<evidence type="ECO:0000250" key="1"/>
<evidence type="ECO:0000255" key="2"/>
<evidence type="ECO:0000255" key="3">
    <source>
        <dbReference type="PROSITE-ProRule" id="PRU10039"/>
    </source>
</evidence>
<evidence type="ECO:0000269" key="4">
    <source>
    </source>
</evidence>
<evidence type="ECO:0000269" key="5">
    <source>
    </source>
</evidence>
<evidence type="ECO:0000305" key="6"/>
<sequence length="381" mass="42468">EDCLYLNIYAPAHAETGSKLPVMVWFPGGAFETGSASIFDGSALASYENVLVVTIQYRLGIFGFFNTGDEHARGNWAFMDQVAALVWVQENIEFFGGDPRCVTIFGESAGAISVSSLILSPMTKGLFHKAIMASGVAIIPYLKASDYERNDDLQTIASICDCNASDSVALLQCLRAKSSEELLSISQKTKSFTRVVDGLFFPNELLDLLAQKLFHLVPSIIGVNNHECGFLLPMKEFPEILGGSNKSLALQLIHSVLHIPVQYSYLVADEYFHNKHSLLDIRNRFLDLLGDVFFVVPGLVTAQYHTDAGAPVYFYEFQHRPQCLKDRKPPFVKADHTDEIRFVFGGAFLKGNIVMFEEATEEEKALSRKMMRYWANFARTG</sequence>
<reference key="1">
    <citation type="journal article" date="2005" name="Biochem. J.">
        <title>The epididymal soluble prion protein forms a high-molecular-mass complex in association with hydrophobic proteins.</title>
        <authorList>
            <person name="Ecroyd H."/>
            <person name="Belghazi M."/>
            <person name="Dacheux J.-L."/>
            <person name="Gatti J.-L."/>
        </authorList>
    </citation>
    <scope>NUCLEOTIDE SEQUENCE [MRNA]</scope>
    <scope>IDENTIFICATION BY MASS SPECTROMETRY</scope>
    <scope>IDENTIFICATION IN COMPLEX WITH PRNP; CLU; BPI; MANBA AND GLB1</scope>
    <source>
        <tissue>Epididymis</tissue>
    </source>
</reference>
<reference key="2">
    <citation type="journal article" date="2006" name="Biol. Reprod.">
        <title>An epididymal form of cauxin, a carboxylesterase-like enzyme, is present and active in mammalian male reproductive fluids.</title>
        <authorList>
            <person name="Ecroyd H."/>
            <person name="Belghazi M."/>
            <person name="Dacheux J.-L."/>
            <person name="Miyazaki M."/>
            <person name="Yamashita T."/>
            <person name="Gatti J.-L."/>
        </authorList>
    </citation>
    <scope>ENZYME ACTIVITY</scope>
    <scope>GLYCOSYLATION</scope>
    <scope>TISSUE SPECIFICITY</scope>
</reference>
<comment type="function">
    <text evidence="1">Involved in the detoxification of xenobiotics and in the activation of ester and amide prodrugs.</text>
</comment>
<comment type="catalytic activity">
    <reaction evidence="3 5">
        <text>a carboxylic ester + H2O = an alcohol + a carboxylate + H(+)</text>
        <dbReference type="Rhea" id="RHEA:21164"/>
        <dbReference type="ChEBI" id="CHEBI:15377"/>
        <dbReference type="ChEBI" id="CHEBI:15378"/>
        <dbReference type="ChEBI" id="CHEBI:29067"/>
        <dbReference type="ChEBI" id="CHEBI:30879"/>
        <dbReference type="ChEBI" id="CHEBI:33308"/>
        <dbReference type="EC" id="3.1.1.1"/>
    </reaction>
</comment>
<comment type="subunit">
    <text evidence="4">Component of a epididymal complex at least composed of soluble form of prion protein PRNP, CLU, BPI, CES5A, MANBA and GLB1.</text>
</comment>
<comment type="subcellular location">
    <subcellularLocation>
        <location evidence="1">Secreted</location>
    </subcellularLocation>
</comment>
<comment type="tissue specificity">
    <text evidence="5">Detected in corpus and cauda epididymal fluid. Present in seminal fluid but not found to be associated with sperm (at protein level). Not expressed in other tissues.</text>
</comment>
<comment type="PTM">
    <text evidence="5">N-glycosylated.</text>
</comment>
<comment type="similarity">
    <text evidence="6">Belongs to the type-B carboxylesterase/lipase family.</text>
</comment>
<feature type="chain" id="PRO_0000308594" description="Carboxylesterase 5A">
    <location>
        <begin position="1" status="less than"/>
        <end position="381" status="greater than"/>
    </location>
</feature>
<feature type="active site" description="Acyl-ester intermediate" evidence="3">
    <location>
        <position position="108"/>
    </location>
</feature>
<feature type="active site" description="Charge relay system" evidence="1">
    <location>
        <position position="227"/>
    </location>
</feature>
<feature type="active site" description="Charge relay system" evidence="1">
    <location>
        <position position="336"/>
    </location>
</feature>
<feature type="glycosylation site" description="N-linked (GlcNAc...) asparagine" evidence="2">
    <location>
        <position position="163"/>
    </location>
</feature>
<feature type="glycosylation site" description="N-linked (GlcNAc...) asparagine" evidence="2">
    <location>
        <position position="245"/>
    </location>
</feature>
<feature type="disulfide bond" evidence="1">
    <location>
        <begin position="162"/>
        <end position="173"/>
    </location>
</feature>
<feature type="non-terminal residue">
    <location>
        <position position="1"/>
    </location>
</feature>
<feature type="non-terminal residue">
    <location>
        <position position="381"/>
    </location>
</feature>
<dbReference type="EC" id="3.1.1.1"/>
<dbReference type="EMBL" id="AM075621">
    <property type="protein sequence ID" value="CAJ27151.1"/>
    <property type="molecule type" value="mRNA"/>
</dbReference>
<dbReference type="SMR" id="Q3T930"/>
<dbReference type="STRING" id="9940.ENSOARP00000019937"/>
<dbReference type="ESTHER" id="sheep-cauxin">
    <property type="family name" value="Carb_B_Chordata"/>
</dbReference>
<dbReference type="GlyCosmos" id="Q3T930">
    <property type="glycosylation" value="2 sites, No reported glycans"/>
</dbReference>
<dbReference type="PaxDb" id="9940-ENSOARP00000019937"/>
<dbReference type="eggNOG" id="KOG1516">
    <property type="taxonomic scope" value="Eukaryota"/>
</dbReference>
<dbReference type="Proteomes" id="UP000002356">
    <property type="component" value="Unplaced"/>
</dbReference>
<dbReference type="GO" id="GO:0005576">
    <property type="term" value="C:extracellular region"/>
    <property type="evidence" value="ECO:0007669"/>
    <property type="project" value="UniProtKB-SubCell"/>
</dbReference>
<dbReference type="GO" id="GO:0106435">
    <property type="term" value="F:carboxylesterase activity"/>
    <property type="evidence" value="ECO:0007669"/>
    <property type="project" value="UniProtKB-EC"/>
</dbReference>
<dbReference type="Gene3D" id="3.40.50.1820">
    <property type="entry name" value="alpha/beta hydrolase"/>
    <property type="match status" value="1"/>
</dbReference>
<dbReference type="InterPro" id="IPR029058">
    <property type="entry name" value="AB_hydrolase_fold"/>
</dbReference>
<dbReference type="InterPro" id="IPR002018">
    <property type="entry name" value="CarbesteraseB"/>
</dbReference>
<dbReference type="InterPro" id="IPR019826">
    <property type="entry name" value="Carboxylesterase_B_AS"/>
</dbReference>
<dbReference type="InterPro" id="IPR019819">
    <property type="entry name" value="Carboxylesterase_B_CS"/>
</dbReference>
<dbReference type="InterPro" id="IPR050309">
    <property type="entry name" value="Type-B_Carboxylest/Lipase"/>
</dbReference>
<dbReference type="PANTHER" id="PTHR11559">
    <property type="entry name" value="CARBOXYLESTERASE"/>
    <property type="match status" value="1"/>
</dbReference>
<dbReference type="Pfam" id="PF00135">
    <property type="entry name" value="COesterase"/>
    <property type="match status" value="1"/>
</dbReference>
<dbReference type="SUPFAM" id="SSF53474">
    <property type="entry name" value="alpha/beta-Hydrolases"/>
    <property type="match status" value="1"/>
</dbReference>
<dbReference type="PROSITE" id="PS00122">
    <property type="entry name" value="CARBOXYLESTERASE_B_1"/>
    <property type="match status" value="1"/>
</dbReference>
<dbReference type="PROSITE" id="PS00941">
    <property type="entry name" value="CARBOXYLESTERASE_B_2"/>
    <property type="match status" value="1"/>
</dbReference>
<gene>
    <name type="primary">CES5A</name>
    <name type="synonym">CES7</name>
</gene>